<keyword id="KW-0687">Ribonucleoprotein</keyword>
<keyword id="KW-0689">Ribosomal protein</keyword>
<protein>
    <recommendedName>
        <fullName evidence="1">Large ribosomal subunit protein bL35</fullName>
    </recommendedName>
    <alternativeName>
        <fullName evidence="3">50S ribosomal protein L35</fullName>
    </alternativeName>
</protein>
<organism>
    <name type="scientific">Pseudomonas paraeruginosa (strain DSM 24068 / PA7)</name>
    <name type="common">Pseudomonas aeruginosa (strain PA7)</name>
    <dbReference type="NCBI Taxonomy" id="381754"/>
    <lineage>
        <taxon>Bacteria</taxon>
        <taxon>Pseudomonadati</taxon>
        <taxon>Pseudomonadota</taxon>
        <taxon>Gammaproteobacteria</taxon>
        <taxon>Pseudomonadales</taxon>
        <taxon>Pseudomonadaceae</taxon>
        <taxon>Pseudomonas</taxon>
        <taxon>Pseudomonas paraeruginosa</taxon>
    </lineage>
</organism>
<sequence length="64" mass="7364">MPKMKTKSGAAKRFKKTAGGLKHKHAFKSHILTKMTTKRKRQLRGTSMLNKSDVARVERSLRLR</sequence>
<name>RL35_PSEP7</name>
<dbReference type="EMBL" id="CP000744">
    <property type="protein sequence ID" value="ABR81156.1"/>
    <property type="molecule type" value="Genomic_DNA"/>
</dbReference>
<dbReference type="RefSeq" id="WP_003090673.1">
    <property type="nucleotide sequence ID" value="NC_009656.1"/>
</dbReference>
<dbReference type="SMR" id="A6V487"/>
<dbReference type="GeneID" id="77220769"/>
<dbReference type="KEGG" id="pap:PSPA7_2506"/>
<dbReference type="HOGENOM" id="CLU_169643_1_1_6"/>
<dbReference type="Proteomes" id="UP000001582">
    <property type="component" value="Chromosome"/>
</dbReference>
<dbReference type="GO" id="GO:0022625">
    <property type="term" value="C:cytosolic large ribosomal subunit"/>
    <property type="evidence" value="ECO:0007669"/>
    <property type="project" value="TreeGrafter"/>
</dbReference>
<dbReference type="GO" id="GO:0003735">
    <property type="term" value="F:structural constituent of ribosome"/>
    <property type="evidence" value="ECO:0007669"/>
    <property type="project" value="InterPro"/>
</dbReference>
<dbReference type="GO" id="GO:0006412">
    <property type="term" value="P:translation"/>
    <property type="evidence" value="ECO:0007669"/>
    <property type="project" value="UniProtKB-UniRule"/>
</dbReference>
<dbReference type="FunFam" id="4.10.410.60:FF:000001">
    <property type="entry name" value="50S ribosomal protein L35"/>
    <property type="match status" value="1"/>
</dbReference>
<dbReference type="Gene3D" id="4.10.410.60">
    <property type="match status" value="1"/>
</dbReference>
<dbReference type="HAMAP" id="MF_00514">
    <property type="entry name" value="Ribosomal_bL35"/>
    <property type="match status" value="1"/>
</dbReference>
<dbReference type="InterPro" id="IPR001706">
    <property type="entry name" value="Ribosomal_bL35"/>
</dbReference>
<dbReference type="InterPro" id="IPR021137">
    <property type="entry name" value="Ribosomal_bL35-like"/>
</dbReference>
<dbReference type="InterPro" id="IPR018265">
    <property type="entry name" value="Ribosomal_bL35_CS"/>
</dbReference>
<dbReference type="InterPro" id="IPR037229">
    <property type="entry name" value="Ribosomal_bL35_sf"/>
</dbReference>
<dbReference type="NCBIfam" id="TIGR00001">
    <property type="entry name" value="rpmI_bact"/>
    <property type="match status" value="1"/>
</dbReference>
<dbReference type="PANTHER" id="PTHR33343">
    <property type="entry name" value="54S RIBOSOMAL PROTEIN BL35M"/>
    <property type="match status" value="1"/>
</dbReference>
<dbReference type="PANTHER" id="PTHR33343:SF1">
    <property type="entry name" value="LARGE RIBOSOMAL SUBUNIT PROTEIN BL35M"/>
    <property type="match status" value="1"/>
</dbReference>
<dbReference type="Pfam" id="PF01632">
    <property type="entry name" value="Ribosomal_L35p"/>
    <property type="match status" value="1"/>
</dbReference>
<dbReference type="PRINTS" id="PR00064">
    <property type="entry name" value="RIBOSOMALL35"/>
</dbReference>
<dbReference type="SUPFAM" id="SSF143034">
    <property type="entry name" value="L35p-like"/>
    <property type="match status" value="1"/>
</dbReference>
<dbReference type="PROSITE" id="PS00936">
    <property type="entry name" value="RIBOSOMAL_L35"/>
    <property type="match status" value="1"/>
</dbReference>
<gene>
    <name evidence="1" type="primary">rpmI</name>
    <name type="ordered locus">PSPA7_2506</name>
</gene>
<reference key="1">
    <citation type="submission" date="2007-06" db="EMBL/GenBank/DDBJ databases">
        <authorList>
            <person name="Dodson R.J."/>
            <person name="Harkins D."/>
            <person name="Paulsen I.T."/>
        </authorList>
    </citation>
    <scope>NUCLEOTIDE SEQUENCE [LARGE SCALE GENOMIC DNA]</scope>
    <source>
        <strain>DSM 24068 / PA7</strain>
    </source>
</reference>
<proteinExistence type="inferred from homology"/>
<comment type="similarity">
    <text evidence="1">Belongs to the bacterial ribosomal protein bL35 family.</text>
</comment>
<feature type="chain" id="PRO_1000050744" description="Large ribosomal subunit protein bL35">
    <location>
        <begin position="1"/>
        <end position="64"/>
    </location>
</feature>
<feature type="region of interest" description="Disordered" evidence="2">
    <location>
        <begin position="1"/>
        <end position="64"/>
    </location>
</feature>
<feature type="compositionally biased region" description="Basic residues" evidence="2">
    <location>
        <begin position="1"/>
        <end position="28"/>
    </location>
</feature>
<feature type="compositionally biased region" description="Basic and acidic residues" evidence="2">
    <location>
        <begin position="53"/>
        <end position="64"/>
    </location>
</feature>
<accession>A6V487</accession>
<evidence type="ECO:0000255" key="1">
    <source>
        <dbReference type="HAMAP-Rule" id="MF_00514"/>
    </source>
</evidence>
<evidence type="ECO:0000256" key="2">
    <source>
        <dbReference type="SAM" id="MobiDB-lite"/>
    </source>
</evidence>
<evidence type="ECO:0000305" key="3"/>